<reference key="1">
    <citation type="submission" date="2007-11" db="EMBL/GenBank/DDBJ databases">
        <authorList>
            <consortium name="The Salmonella enterica serovar Arizonae Genome Sequencing Project"/>
            <person name="McClelland M."/>
            <person name="Sanderson E.K."/>
            <person name="Porwollik S."/>
            <person name="Spieth J."/>
            <person name="Clifton W.S."/>
            <person name="Fulton R."/>
            <person name="Chunyan W."/>
            <person name="Wollam A."/>
            <person name="Shah N."/>
            <person name="Pepin K."/>
            <person name="Bhonagiri V."/>
            <person name="Nash W."/>
            <person name="Johnson M."/>
            <person name="Thiruvilangam P."/>
            <person name="Wilson R."/>
        </authorList>
    </citation>
    <scope>NUCLEOTIDE SEQUENCE [LARGE SCALE GENOMIC DNA]</scope>
    <source>
        <strain>ATCC BAA-731 / CDC346-86 / RSK2980</strain>
    </source>
</reference>
<gene>
    <name evidence="1" type="primary">rpsT</name>
    <name type="ordered locus">SARI_02950</name>
</gene>
<name>RS20_SALAR</name>
<comment type="function">
    <text evidence="1">Binds directly to 16S ribosomal RNA.</text>
</comment>
<comment type="similarity">
    <text evidence="1">Belongs to the bacterial ribosomal protein bS20 family.</text>
</comment>
<organism>
    <name type="scientific">Salmonella arizonae (strain ATCC BAA-731 / CDC346-86 / RSK2980)</name>
    <dbReference type="NCBI Taxonomy" id="41514"/>
    <lineage>
        <taxon>Bacteria</taxon>
        <taxon>Pseudomonadati</taxon>
        <taxon>Pseudomonadota</taxon>
        <taxon>Gammaproteobacteria</taxon>
        <taxon>Enterobacterales</taxon>
        <taxon>Enterobacteriaceae</taxon>
        <taxon>Salmonella</taxon>
    </lineage>
</organism>
<evidence type="ECO:0000255" key="1">
    <source>
        <dbReference type="HAMAP-Rule" id="MF_00500"/>
    </source>
</evidence>
<evidence type="ECO:0000256" key="2">
    <source>
        <dbReference type="SAM" id="MobiDB-lite"/>
    </source>
</evidence>
<evidence type="ECO:0000305" key="3"/>
<protein>
    <recommendedName>
        <fullName evidence="1">Small ribosomal subunit protein bS20</fullName>
    </recommendedName>
    <alternativeName>
        <fullName evidence="3">30S ribosomal protein S20</fullName>
    </alternativeName>
</protein>
<proteinExistence type="inferred from homology"/>
<sequence>MANIKSAKKRAVQSEKARKHNASRRSMMRTFIKKVYAAIEAGDKAAALKAFNEMQPIVDRQAAKGLIHKNKAARHKANLTAQINKLA</sequence>
<dbReference type="EMBL" id="CP000880">
    <property type="protein sequence ID" value="ABX22796.1"/>
    <property type="molecule type" value="Genomic_DNA"/>
</dbReference>
<dbReference type="SMR" id="A9MR48"/>
<dbReference type="STRING" id="41514.SARI_02950"/>
<dbReference type="KEGG" id="ses:SARI_02950"/>
<dbReference type="HOGENOM" id="CLU_160655_4_0_6"/>
<dbReference type="Proteomes" id="UP000002084">
    <property type="component" value="Chromosome"/>
</dbReference>
<dbReference type="GO" id="GO:0005829">
    <property type="term" value="C:cytosol"/>
    <property type="evidence" value="ECO:0007669"/>
    <property type="project" value="TreeGrafter"/>
</dbReference>
<dbReference type="GO" id="GO:0015935">
    <property type="term" value="C:small ribosomal subunit"/>
    <property type="evidence" value="ECO:0007669"/>
    <property type="project" value="TreeGrafter"/>
</dbReference>
<dbReference type="GO" id="GO:0070181">
    <property type="term" value="F:small ribosomal subunit rRNA binding"/>
    <property type="evidence" value="ECO:0007669"/>
    <property type="project" value="TreeGrafter"/>
</dbReference>
<dbReference type="GO" id="GO:0003735">
    <property type="term" value="F:structural constituent of ribosome"/>
    <property type="evidence" value="ECO:0007669"/>
    <property type="project" value="InterPro"/>
</dbReference>
<dbReference type="GO" id="GO:0006412">
    <property type="term" value="P:translation"/>
    <property type="evidence" value="ECO:0007669"/>
    <property type="project" value="UniProtKB-UniRule"/>
</dbReference>
<dbReference type="FunFam" id="1.20.58.110:FF:000001">
    <property type="entry name" value="30S ribosomal protein S20"/>
    <property type="match status" value="1"/>
</dbReference>
<dbReference type="Gene3D" id="1.20.58.110">
    <property type="entry name" value="Ribosomal protein S20"/>
    <property type="match status" value="1"/>
</dbReference>
<dbReference type="HAMAP" id="MF_00500">
    <property type="entry name" value="Ribosomal_bS20"/>
    <property type="match status" value="1"/>
</dbReference>
<dbReference type="InterPro" id="IPR002583">
    <property type="entry name" value="Ribosomal_bS20"/>
</dbReference>
<dbReference type="InterPro" id="IPR036510">
    <property type="entry name" value="Ribosomal_bS20_sf"/>
</dbReference>
<dbReference type="NCBIfam" id="TIGR00029">
    <property type="entry name" value="S20"/>
    <property type="match status" value="1"/>
</dbReference>
<dbReference type="PANTHER" id="PTHR33398">
    <property type="entry name" value="30S RIBOSOMAL PROTEIN S20"/>
    <property type="match status" value="1"/>
</dbReference>
<dbReference type="PANTHER" id="PTHR33398:SF1">
    <property type="entry name" value="SMALL RIBOSOMAL SUBUNIT PROTEIN BS20C"/>
    <property type="match status" value="1"/>
</dbReference>
<dbReference type="Pfam" id="PF01649">
    <property type="entry name" value="Ribosomal_S20p"/>
    <property type="match status" value="1"/>
</dbReference>
<dbReference type="SUPFAM" id="SSF46992">
    <property type="entry name" value="Ribosomal protein S20"/>
    <property type="match status" value="1"/>
</dbReference>
<accession>A9MR48</accession>
<keyword id="KW-1185">Reference proteome</keyword>
<keyword id="KW-0687">Ribonucleoprotein</keyword>
<keyword id="KW-0689">Ribosomal protein</keyword>
<keyword id="KW-0694">RNA-binding</keyword>
<keyword id="KW-0699">rRNA-binding</keyword>
<feature type="chain" id="PRO_1000081446" description="Small ribosomal subunit protein bS20">
    <location>
        <begin position="1"/>
        <end position="87"/>
    </location>
</feature>
<feature type="region of interest" description="Disordered" evidence="2">
    <location>
        <begin position="1"/>
        <end position="26"/>
    </location>
</feature>